<proteinExistence type="inferred from homology"/>
<name>AZOR_SHESA</name>
<accession>A0KRZ0</accession>
<feature type="chain" id="PRO_1000066526" description="FMN-dependent NADH:quinone oxidoreductase">
    <location>
        <begin position="1"/>
        <end position="198"/>
    </location>
</feature>
<feature type="binding site" evidence="1">
    <location>
        <position position="10"/>
    </location>
    <ligand>
        <name>FMN</name>
        <dbReference type="ChEBI" id="CHEBI:58210"/>
    </ligand>
</feature>
<feature type="binding site" evidence="1">
    <location>
        <begin position="16"/>
        <end position="18"/>
    </location>
    <ligand>
        <name>FMN</name>
        <dbReference type="ChEBI" id="CHEBI:58210"/>
    </ligand>
</feature>
<feature type="binding site" evidence="1">
    <location>
        <begin position="94"/>
        <end position="97"/>
    </location>
    <ligand>
        <name>FMN</name>
        <dbReference type="ChEBI" id="CHEBI:58210"/>
    </ligand>
</feature>
<feature type="binding site" evidence="1">
    <location>
        <begin position="138"/>
        <end position="141"/>
    </location>
    <ligand>
        <name>FMN</name>
        <dbReference type="ChEBI" id="CHEBI:58210"/>
    </ligand>
</feature>
<gene>
    <name evidence="1" type="primary">azoR</name>
    <name type="ordered locus">Shewana3_0316</name>
</gene>
<keyword id="KW-0285">Flavoprotein</keyword>
<keyword id="KW-0288">FMN</keyword>
<keyword id="KW-0520">NAD</keyword>
<keyword id="KW-0560">Oxidoreductase</keyword>
<evidence type="ECO:0000255" key="1">
    <source>
        <dbReference type="HAMAP-Rule" id="MF_01216"/>
    </source>
</evidence>
<protein>
    <recommendedName>
        <fullName evidence="1">FMN-dependent NADH:quinone oxidoreductase</fullName>
        <ecNumber evidence="1">1.6.5.-</ecNumber>
    </recommendedName>
    <alternativeName>
        <fullName evidence="1">Azo-dye reductase</fullName>
    </alternativeName>
    <alternativeName>
        <fullName evidence="1">FMN-dependent NADH-azo compound oxidoreductase</fullName>
    </alternativeName>
    <alternativeName>
        <fullName evidence="1">FMN-dependent NADH-azoreductase</fullName>
        <ecNumber evidence="1">1.7.1.17</ecNumber>
    </alternativeName>
</protein>
<reference key="1">
    <citation type="submission" date="2006-09" db="EMBL/GenBank/DDBJ databases">
        <title>Complete sequence of chromosome 1 of Shewanella sp. ANA-3.</title>
        <authorList>
            <person name="Copeland A."/>
            <person name="Lucas S."/>
            <person name="Lapidus A."/>
            <person name="Barry K."/>
            <person name="Detter J.C."/>
            <person name="Glavina del Rio T."/>
            <person name="Hammon N."/>
            <person name="Israni S."/>
            <person name="Dalin E."/>
            <person name="Tice H."/>
            <person name="Pitluck S."/>
            <person name="Chertkov O."/>
            <person name="Brettin T."/>
            <person name="Bruce D."/>
            <person name="Han C."/>
            <person name="Tapia R."/>
            <person name="Gilna P."/>
            <person name="Schmutz J."/>
            <person name="Larimer F."/>
            <person name="Land M."/>
            <person name="Hauser L."/>
            <person name="Kyrpides N."/>
            <person name="Kim E."/>
            <person name="Newman D."/>
            <person name="Salticov C."/>
            <person name="Konstantinidis K."/>
            <person name="Klappenback J."/>
            <person name="Tiedje J."/>
            <person name="Richardson P."/>
        </authorList>
    </citation>
    <scope>NUCLEOTIDE SEQUENCE [LARGE SCALE GENOMIC DNA]</scope>
    <source>
        <strain>ANA-3</strain>
    </source>
</reference>
<dbReference type="EC" id="1.6.5.-" evidence="1"/>
<dbReference type="EC" id="1.7.1.17" evidence="1"/>
<dbReference type="EMBL" id="CP000469">
    <property type="protein sequence ID" value="ABK46559.1"/>
    <property type="molecule type" value="Genomic_DNA"/>
</dbReference>
<dbReference type="RefSeq" id="WP_011715548.1">
    <property type="nucleotide sequence ID" value="NC_008577.1"/>
</dbReference>
<dbReference type="SMR" id="A0KRZ0"/>
<dbReference type="STRING" id="94122.Shewana3_0316"/>
<dbReference type="GeneID" id="94726307"/>
<dbReference type="KEGG" id="shn:Shewana3_0316"/>
<dbReference type="eggNOG" id="COG1182">
    <property type="taxonomic scope" value="Bacteria"/>
</dbReference>
<dbReference type="HOGENOM" id="CLU_088964_0_0_6"/>
<dbReference type="OrthoDB" id="9787136at2"/>
<dbReference type="Proteomes" id="UP000002589">
    <property type="component" value="Chromosome"/>
</dbReference>
<dbReference type="GO" id="GO:0009055">
    <property type="term" value="F:electron transfer activity"/>
    <property type="evidence" value="ECO:0007669"/>
    <property type="project" value="UniProtKB-UniRule"/>
</dbReference>
<dbReference type="GO" id="GO:0010181">
    <property type="term" value="F:FMN binding"/>
    <property type="evidence" value="ECO:0007669"/>
    <property type="project" value="UniProtKB-UniRule"/>
</dbReference>
<dbReference type="GO" id="GO:0016652">
    <property type="term" value="F:oxidoreductase activity, acting on NAD(P)H as acceptor"/>
    <property type="evidence" value="ECO:0007669"/>
    <property type="project" value="UniProtKB-UniRule"/>
</dbReference>
<dbReference type="GO" id="GO:0016655">
    <property type="term" value="F:oxidoreductase activity, acting on NAD(P)H, quinone or similar compound as acceptor"/>
    <property type="evidence" value="ECO:0007669"/>
    <property type="project" value="InterPro"/>
</dbReference>
<dbReference type="Gene3D" id="3.40.50.360">
    <property type="match status" value="1"/>
</dbReference>
<dbReference type="HAMAP" id="MF_01216">
    <property type="entry name" value="Azoreductase_type1"/>
    <property type="match status" value="1"/>
</dbReference>
<dbReference type="InterPro" id="IPR003680">
    <property type="entry name" value="Flavodoxin_fold"/>
</dbReference>
<dbReference type="InterPro" id="IPR029039">
    <property type="entry name" value="Flavoprotein-like_sf"/>
</dbReference>
<dbReference type="InterPro" id="IPR050104">
    <property type="entry name" value="FMN-dep_NADH:Q_OxRdtase_AzoR1"/>
</dbReference>
<dbReference type="InterPro" id="IPR023048">
    <property type="entry name" value="NADH:quinone_OxRdtase_FMN_depd"/>
</dbReference>
<dbReference type="PANTHER" id="PTHR43741">
    <property type="entry name" value="FMN-DEPENDENT NADH-AZOREDUCTASE 1"/>
    <property type="match status" value="1"/>
</dbReference>
<dbReference type="PANTHER" id="PTHR43741:SF2">
    <property type="entry name" value="FMN-DEPENDENT NADH:QUINONE OXIDOREDUCTASE"/>
    <property type="match status" value="1"/>
</dbReference>
<dbReference type="Pfam" id="PF02525">
    <property type="entry name" value="Flavodoxin_2"/>
    <property type="match status" value="1"/>
</dbReference>
<dbReference type="SUPFAM" id="SSF52218">
    <property type="entry name" value="Flavoproteins"/>
    <property type="match status" value="1"/>
</dbReference>
<comment type="function">
    <text evidence="1">Quinone reductase that provides resistance to thiol-specific stress caused by electrophilic quinones.</text>
</comment>
<comment type="function">
    <text evidence="1">Also exhibits azoreductase activity. Catalyzes the reductive cleavage of the azo bond in aromatic azo compounds to the corresponding amines.</text>
</comment>
<comment type="catalytic activity">
    <reaction evidence="1">
        <text>2 a quinone + NADH + H(+) = 2 a 1,4-benzosemiquinone + NAD(+)</text>
        <dbReference type="Rhea" id="RHEA:65952"/>
        <dbReference type="ChEBI" id="CHEBI:15378"/>
        <dbReference type="ChEBI" id="CHEBI:57540"/>
        <dbReference type="ChEBI" id="CHEBI:57945"/>
        <dbReference type="ChEBI" id="CHEBI:132124"/>
        <dbReference type="ChEBI" id="CHEBI:134225"/>
    </reaction>
</comment>
<comment type="catalytic activity">
    <reaction evidence="1">
        <text>N,N-dimethyl-1,4-phenylenediamine + anthranilate + 2 NAD(+) = 2-(4-dimethylaminophenyl)diazenylbenzoate + 2 NADH + 2 H(+)</text>
        <dbReference type="Rhea" id="RHEA:55872"/>
        <dbReference type="ChEBI" id="CHEBI:15378"/>
        <dbReference type="ChEBI" id="CHEBI:15783"/>
        <dbReference type="ChEBI" id="CHEBI:16567"/>
        <dbReference type="ChEBI" id="CHEBI:57540"/>
        <dbReference type="ChEBI" id="CHEBI:57945"/>
        <dbReference type="ChEBI" id="CHEBI:71579"/>
        <dbReference type="EC" id="1.7.1.17"/>
    </reaction>
</comment>
<comment type="cofactor">
    <cofactor evidence="1">
        <name>FMN</name>
        <dbReference type="ChEBI" id="CHEBI:58210"/>
    </cofactor>
    <text evidence="1">Binds 1 FMN per subunit.</text>
</comment>
<comment type="subunit">
    <text evidence="1">Homodimer.</text>
</comment>
<comment type="similarity">
    <text evidence="1">Belongs to the azoreductase type 1 family.</text>
</comment>
<organism>
    <name type="scientific">Shewanella sp. (strain ANA-3)</name>
    <dbReference type="NCBI Taxonomy" id="94122"/>
    <lineage>
        <taxon>Bacteria</taxon>
        <taxon>Pseudomonadati</taxon>
        <taxon>Pseudomonadota</taxon>
        <taxon>Gammaproteobacteria</taxon>
        <taxon>Alteromonadales</taxon>
        <taxon>Shewanellaceae</taxon>
        <taxon>Shewanella</taxon>
    </lineage>
</organism>
<sequence>MSKVLVLKSSILGGYSQSALLVDHLIGKWEDQGATITVRDLAGKDVLPMVDGEIASGLRGGAELTARQQEMLDLSNALVEELKANDTIVITAPMYNFNIPTQLKNWIDFVARAGVTFTYTENGPKGLVEGKRAVLITTRGGAHKDGPTDHIVPFLKTFLGFIGITDVEVVYGEALNMGPEANQKGISEAKQSLDALTV</sequence>